<protein>
    <recommendedName>
        <fullName evidence="7">Acyltransferase AFT15-1</fullName>
        <ecNumber evidence="7">2.3.1.-</ecNumber>
    </recommendedName>
    <alternativeName>
        <fullName evidence="7">AF-toxin biosynthesis protein 15-1</fullName>
    </alternativeName>
</protein>
<sequence length="517" mass="57074">MKVTITSIDQVLPSVEITAPKSLALSHIDEWHSRGRSSLVWLYPKPKKPTQSLQLLDHLRSSLSQALNKFPQYAGKLSHSLQTGTSQKSKTRLCLTWGTGNDPGVHYITARASSPIDALLPPLGTSTGFTNGSGSYAWDRSGRSCIGLWPAVPLNKVYETCIQITTFECGGFSLSITMNHAVADATSVILFARHWSKTHELMVKVQTPSLSIAEPCFAPHLIDQYSTLELQDEGDNGKLLNKAHALPTLRNDLYESGARSLPDRLELSETYSVGDDIAVGDWERSGPMRSYMLHFSKEDINKIWESAKKEAGQDVSRQAAIVSYIWLAIIRAREWDKHGVCEPIKLFITFDVRRRLGLPDTLLGSPVLVTHVKFNGNDAISKSHGLLANRIWKTLSTYDVESVCAALYDITSSRPLISPAIWLGGRSTLFSSLCHADMYDVTFHETGPLLAAPAFAGMGGMIGLIKSKSAVPSRLPETYEDGIDMFFELDTESSIKLFSDPALSIFDGRALLQEFRQ</sequence>
<gene>
    <name type="primary">AFT15-1</name>
</gene>
<organism>
    <name type="scientific">Alternaria alternata</name>
    <name type="common">Alternaria rot fungus</name>
    <name type="synonym">Torula alternata</name>
    <dbReference type="NCBI Taxonomy" id="5599"/>
    <lineage>
        <taxon>Eukaryota</taxon>
        <taxon>Fungi</taxon>
        <taxon>Dikarya</taxon>
        <taxon>Ascomycota</taxon>
        <taxon>Pezizomycotina</taxon>
        <taxon>Dothideomycetes</taxon>
        <taxon>Pleosporomycetidae</taxon>
        <taxon>Pleosporales</taxon>
        <taxon>Pleosporineae</taxon>
        <taxon>Pleosporaceae</taxon>
        <taxon>Alternaria</taxon>
        <taxon>Alternaria sect. Alternaria</taxon>
        <taxon>Alternaria alternata complex</taxon>
    </lineage>
</organism>
<proteinExistence type="inferred from homology"/>
<comment type="function">
    <text evidence="2 3 4 5 6 8">Acyltransferase; part of the gene clusters that mediate the biosynthesis of the host-selective toxins (HSTs) AF-toxins responsible for Alternaria black spot of strawberry disease by the strawberry pathotype (Probable). AF-toxin I and III are valine derivatives of 2,3-dyhydroxy-isovaleric acid and 2-hydroxy-isovaleric acid respectively, while AF II is an isoleucine derivative of 2-hydroxy-valeric acid (PubMed:15066029, PubMed:22846083, Ref.4). These derivatives are bound to a 9,10-epoxy-8-hydroxy-9-methyl-decatrienoic acid (EDA) moiety (PubMed:15066029, PubMed:22846083, Ref.4). On cellular level, AF-toxins affect plasma membrane of susceptible cells and cause a sudden increase in loss of K(+) after a few minutes of toxin treatment (PubMed:22846083). The aldo-keto reductase AFTS1 catalyzes the conversion of 2-keto-isovaleric acid (2-KIV) to 2-hydroxy-isovaleric acid (2-HIV) by reduction of its ketone to an alcohol (PubMed:15066029). The acyl-CoA ligase AFT1, the hydrolase AFT2 and the enoyl-CoA hydratases AFT3 and AFT6, but also the polyketide synthase AFT9, the acyl-CoA dehydrogenase AFT10, the cytochrome P450 monooxygenase AFT11 and the oxidoreductase AFT12 are all involved in the biosynthesis of the AK-, AF- and ACT-toxin common EDA structural moiety (PubMed:12019223, PubMed:18986255, Ref.4). The exact function of each enzyme, and of additional enzymes identified within the AF-toxin clusters have still to be determined (PubMed:12019223, PubMed:18986255, Ref.4).</text>
</comment>
<comment type="pathway">
    <text evidence="7">Mycotoxin biosynthesis.</text>
</comment>
<comment type="miscellaneous">
    <text evidence="2">Gene clusters encoding host-selective toxins (HSTs) are localized on conditionally dispensable chromosomes (CDCs), also called supernumerary chromosomes, where they are present in multiple copies (PubMed:12019223). The CDCs are not essential for saprophytic growth but controls host-selective pathogenicity (PubMed:12019223).</text>
</comment>
<comment type="similarity">
    <text evidence="7">Belongs to the plant acyltransferase family.</text>
</comment>
<evidence type="ECO:0000250" key="1">
    <source>
        <dbReference type="UniProtKB" id="Q8W1W9"/>
    </source>
</evidence>
<evidence type="ECO:0000269" key="2">
    <source>
    </source>
</evidence>
<evidence type="ECO:0000269" key="3">
    <source>
    </source>
</evidence>
<evidence type="ECO:0000269" key="4">
    <source>
    </source>
</evidence>
<evidence type="ECO:0000269" key="5">
    <source ref="4"/>
</evidence>
<evidence type="ECO:0000303" key="6">
    <source>
    </source>
</evidence>
<evidence type="ECO:0000305" key="7"/>
<evidence type="ECO:0000305" key="8">
    <source>
    </source>
</evidence>
<name>AF151_ALTAL</name>
<keyword id="KW-0808">Transferase</keyword>
<keyword id="KW-0843">Virulence</keyword>
<feature type="chain" id="PRO_0000444863" description="Acyltransferase AFT15-1">
    <location>
        <begin position="1"/>
        <end position="517"/>
    </location>
</feature>
<feature type="active site" description="Proton acceptor" evidence="1">
    <location>
        <position position="180"/>
    </location>
</feature>
<accession>V5XYQ7</accession>
<reference key="1">
    <citation type="journal article" date="2014" name="New Phytol.">
        <title>Complex regulation of secondary metabolism controlling pathogenicity in the phytopathogenic fungus Alternaria alternata.</title>
        <authorList>
            <person name="Takaoka S."/>
            <person name="Kurata M."/>
            <person name="Harimoto Y."/>
            <person name="Hatta R."/>
            <person name="Yamamoto M."/>
            <person name="Akimitsu K."/>
            <person name="Tsuge T."/>
        </authorList>
    </citation>
    <scope>NUCLEOTIDE SEQUENCE [GENOMIC DNA]</scope>
    <source>
        <strain>NAF8</strain>
    </source>
</reference>
<reference key="2">
    <citation type="journal article" date="2002" name="Genetics">
        <title>A conditionally dispensable chromosome controls host-specific pathogenicity in the fungal plant pathogen Alternaria alternata.</title>
        <authorList>
            <person name="Hatta R."/>
            <person name="Ito K."/>
            <person name="Hosaki Y."/>
            <person name="Tanaka T."/>
            <person name="Tanaka A."/>
            <person name="Yamamoto M."/>
            <person name="Akimitsu K."/>
            <person name="Tsuge T."/>
        </authorList>
    </citation>
    <scope>FUNCTION</scope>
    <source>
        <strain>NAF8</strain>
    </source>
</reference>
<reference key="3">
    <citation type="journal article" date="2004" name="Mol. Microbiol.">
        <title>Dissection of the host range of the fungal plant pathogen Alternaria alternata by modification of secondary metabolism.</title>
        <authorList>
            <person name="Ito K."/>
            <person name="Tanaka T."/>
            <person name="Hatta R."/>
            <person name="Yamamoto M."/>
            <person name="Akimitsu K."/>
            <person name="Tsuge T."/>
        </authorList>
    </citation>
    <scope>FUNCTION</scope>
    <source>
        <strain>NAF8</strain>
    </source>
</reference>
<reference key="4">
    <citation type="journal article" date="2005" name="J. Gen. Plant Pathol.">
        <title>Structural analysis of cosmid clone pcAFT-2 carrying AFT10-1 encoding an acyl-CoA dehydrogenase involved in AF-toxin production in the strawberry pathotype of Alternaria alternata.</title>
        <authorList>
            <person name="Ruswandi S."/>
            <person name="Kitani K."/>
            <person name="Akimitsu K."/>
            <person name="Tsuge T."/>
            <person name="Shiraishi T."/>
            <person name="Yamamoto M."/>
        </authorList>
    </citation>
    <scope>FUNCTION</scope>
    <source>
        <strain>NAF8</strain>
    </source>
</reference>
<reference key="5">
    <citation type="journal article" date="2008" name="Mol. Plant Microbe Interact.">
        <title>Functional analysis of a multicopy host-selective ACT-toxin biosynthesis gene in the tangerine pathotype of Alternaria alternata using RNA silencing.</title>
        <authorList>
            <person name="Miyamoto Y."/>
            <person name="Masunaka A."/>
            <person name="Tsuge T."/>
            <person name="Yamamoto M."/>
            <person name="Ohtani K."/>
            <person name="Fukumoto T."/>
            <person name="Gomi K."/>
            <person name="Peever T.L."/>
            <person name="Akimitsu K."/>
        </authorList>
    </citation>
    <scope>FUNCTION</scope>
    <source>
        <strain>NAF8</strain>
    </source>
</reference>
<reference key="6">
    <citation type="journal article" date="2013" name="FEMS Microbiol. Rev.">
        <title>Host-selective toxins produced by the plant pathogenic fungus Alternaria alternata.</title>
        <authorList>
            <person name="Tsuge T."/>
            <person name="Harimoto Y."/>
            <person name="Akimitsu K."/>
            <person name="Ohtani K."/>
            <person name="Kodama M."/>
            <person name="Akagi Y."/>
            <person name="Egusa M."/>
            <person name="Yamamoto M."/>
            <person name="Otani H."/>
        </authorList>
    </citation>
    <scope>REVIEW ON HOST-SELECTIVE TOXINS</scope>
</reference>
<dbReference type="EC" id="2.3.1.-" evidence="7"/>
<dbReference type="EMBL" id="AB872925">
    <property type="protein sequence ID" value="BAO10620.1"/>
    <property type="molecule type" value="Genomic_DNA"/>
</dbReference>
<dbReference type="SMR" id="V5XYQ7"/>
<dbReference type="VEuPathDB" id="FungiDB:CC77DRAFT_1036211"/>
<dbReference type="GO" id="GO:0016740">
    <property type="term" value="F:transferase activity"/>
    <property type="evidence" value="ECO:0007669"/>
    <property type="project" value="UniProtKB-KW"/>
</dbReference>
<dbReference type="Gene3D" id="3.30.559.10">
    <property type="entry name" value="Chloramphenicol acetyltransferase-like domain"/>
    <property type="match status" value="2"/>
</dbReference>
<dbReference type="InterPro" id="IPR023213">
    <property type="entry name" value="CAT-like_dom_sf"/>
</dbReference>
<dbReference type="PANTHER" id="PTHR31623">
    <property type="entry name" value="F21J9.9"/>
    <property type="match status" value="1"/>
</dbReference>
<dbReference type="PANTHER" id="PTHR31623:SF17">
    <property type="entry name" value="F21J9.9"/>
    <property type="match status" value="1"/>
</dbReference>
<dbReference type="Pfam" id="PF02458">
    <property type="entry name" value="Transferase"/>
    <property type="match status" value="1"/>
</dbReference>